<accession>A1WRL3</accession>
<name>DDL_VEREI</name>
<sequence length="331" mass="35110">MSLFDPHLDGASLGKVAVLMGGVSAEREVSLLSGAGVLRALRARAVDAHAFDTAQGDLGALKREGYARCFIALHGRHGEDGTVQGALELLGIAYTGSGVMASSMALDKTMSKRIWRSEGLPTPDWRLVTSGAEAGQALQTLGAPMIVKPAREGSTIGLSKVHQAQQCASAYLLAARYDPEVLCEQFIAGDELTCTVLDQGRRASAQALPLIRIVAPDGNYDYQHKYFSDATRYHCPSGLPEAQERAIGRLAEQAFSALGCRGWARADIMLRASDQQPFLLEINTAPGMTDHSLVPMSARAAGISYEDLCLRLLAMATLDTPPGALSGAARA</sequence>
<comment type="function">
    <text evidence="2">Cell wall formation.</text>
</comment>
<comment type="catalytic activity">
    <reaction evidence="2">
        <text>2 D-alanine + ATP = D-alanyl-D-alanine + ADP + phosphate + H(+)</text>
        <dbReference type="Rhea" id="RHEA:11224"/>
        <dbReference type="ChEBI" id="CHEBI:15378"/>
        <dbReference type="ChEBI" id="CHEBI:30616"/>
        <dbReference type="ChEBI" id="CHEBI:43474"/>
        <dbReference type="ChEBI" id="CHEBI:57416"/>
        <dbReference type="ChEBI" id="CHEBI:57822"/>
        <dbReference type="ChEBI" id="CHEBI:456216"/>
        <dbReference type="EC" id="6.3.2.4"/>
    </reaction>
</comment>
<comment type="cofactor">
    <cofactor evidence="1">
        <name>Mg(2+)</name>
        <dbReference type="ChEBI" id="CHEBI:18420"/>
    </cofactor>
    <cofactor evidence="1">
        <name>Mn(2+)</name>
        <dbReference type="ChEBI" id="CHEBI:29035"/>
    </cofactor>
    <text evidence="1">Binds 2 magnesium or manganese ions per subunit.</text>
</comment>
<comment type="pathway">
    <text evidence="2">Cell wall biogenesis; peptidoglycan biosynthesis.</text>
</comment>
<comment type="subcellular location">
    <subcellularLocation>
        <location evidence="2">Cytoplasm</location>
    </subcellularLocation>
</comment>
<comment type="similarity">
    <text evidence="2">Belongs to the D-alanine--D-alanine ligase family.</text>
</comment>
<protein>
    <recommendedName>
        <fullName evidence="2">D-alanine--D-alanine ligase</fullName>
        <ecNumber evidence="2">6.3.2.4</ecNumber>
    </recommendedName>
    <alternativeName>
        <fullName evidence="2">D-Ala-D-Ala ligase</fullName>
    </alternativeName>
    <alternativeName>
        <fullName evidence="2">D-alanylalanine synthetase</fullName>
    </alternativeName>
</protein>
<evidence type="ECO:0000250" key="1"/>
<evidence type="ECO:0000255" key="2">
    <source>
        <dbReference type="HAMAP-Rule" id="MF_00047"/>
    </source>
</evidence>
<feature type="chain" id="PRO_0000341192" description="D-alanine--D-alanine ligase">
    <location>
        <begin position="1"/>
        <end position="331"/>
    </location>
</feature>
<feature type="domain" description="ATP-grasp" evidence="2">
    <location>
        <begin position="112"/>
        <end position="314"/>
    </location>
</feature>
<feature type="binding site" evidence="2">
    <location>
        <begin position="138"/>
        <end position="193"/>
    </location>
    <ligand>
        <name>ATP</name>
        <dbReference type="ChEBI" id="CHEBI:30616"/>
    </ligand>
</feature>
<feature type="binding site" evidence="2">
    <location>
        <position position="267"/>
    </location>
    <ligand>
        <name>Mg(2+)</name>
        <dbReference type="ChEBI" id="CHEBI:18420"/>
        <label>1</label>
    </ligand>
</feature>
<feature type="binding site" evidence="2">
    <location>
        <position position="281"/>
    </location>
    <ligand>
        <name>Mg(2+)</name>
        <dbReference type="ChEBI" id="CHEBI:18420"/>
        <label>1</label>
    </ligand>
</feature>
<feature type="binding site" evidence="2">
    <location>
        <position position="281"/>
    </location>
    <ligand>
        <name>Mg(2+)</name>
        <dbReference type="ChEBI" id="CHEBI:18420"/>
        <label>2</label>
    </ligand>
</feature>
<feature type="binding site" evidence="2">
    <location>
        <position position="283"/>
    </location>
    <ligand>
        <name>Mg(2+)</name>
        <dbReference type="ChEBI" id="CHEBI:18420"/>
        <label>2</label>
    </ligand>
</feature>
<gene>
    <name evidence="2" type="primary">ddl</name>
    <name type="ordered locus">Veis_4572</name>
</gene>
<reference key="1">
    <citation type="submission" date="2006-12" db="EMBL/GenBank/DDBJ databases">
        <title>Complete sequence of chromosome 1 of Verminephrobacter eiseniae EF01-2.</title>
        <authorList>
            <person name="Copeland A."/>
            <person name="Lucas S."/>
            <person name="Lapidus A."/>
            <person name="Barry K."/>
            <person name="Detter J.C."/>
            <person name="Glavina del Rio T."/>
            <person name="Dalin E."/>
            <person name="Tice H."/>
            <person name="Pitluck S."/>
            <person name="Chertkov O."/>
            <person name="Brettin T."/>
            <person name="Bruce D."/>
            <person name="Han C."/>
            <person name="Tapia R."/>
            <person name="Gilna P."/>
            <person name="Schmutz J."/>
            <person name="Larimer F."/>
            <person name="Land M."/>
            <person name="Hauser L."/>
            <person name="Kyrpides N."/>
            <person name="Kim E."/>
            <person name="Stahl D."/>
            <person name="Richardson P."/>
        </authorList>
    </citation>
    <scope>NUCLEOTIDE SEQUENCE [LARGE SCALE GENOMIC DNA]</scope>
    <source>
        <strain>EF01-2</strain>
    </source>
</reference>
<keyword id="KW-0067">ATP-binding</keyword>
<keyword id="KW-0133">Cell shape</keyword>
<keyword id="KW-0961">Cell wall biogenesis/degradation</keyword>
<keyword id="KW-0963">Cytoplasm</keyword>
<keyword id="KW-0436">Ligase</keyword>
<keyword id="KW-0460">Magnesium</keyword>
<keyword id="KW-0464">Manganese</keyword>
<keyword id="KW-0479">Metal-binding</keyword>
<keyword id="KW-0547">Nucleotide-binding</keyword>
<keyword id="KW-0573">Peptidoglycan synthesis</keyword>
<keyword id="KW-1185">Reference proteome</keyword>
<organism>
    <name type="scientific">Verminephrobacter eiseniae (strain EF01-2)</name>
    <dbReference type="NCBI Taxonomy" id="391735"/>
    <lineage>
        <taxon>Bacteria</taxon>
        <taxon>Pseudomonadati</taxon>
        <taxon>Pseudomonadota</taxon>
        <taxon>Betaproteobacteria</taxon>
        <taxon>Burkholderiales</taxon>
        <taxon>Comamonadaceae</taxon>
        <taxon>Verminephrobacter</taxon>
    </lineage>
</organism>
<dbReference type="EC" id="6.3.2.4" evidence="2"/>
<dbReference type="EMBL" id="CP000542">
    <property type="protein sequence ID" value="ABM60270.1"/>
    <property type="molecule type" value="Genomic_DNA"/>
</dbReference>
<dbReference type="RefSeq" id="WP_011812254.1">
    <property type="nucleotide sequence ID" value="NC_008786.1"/>
</dbReference>
<dbReference type="SMR" id="A1WRL3"/>
<dbReference type="STRING" id="391735.Veis_4572"/>
<dbReference type="GeneID" id="76462865"/>
<dbReference type="KEGG" id="vei:Veis_4572"/>
<dbReference type="eggNOG" id="COG1181">
    <property type="taxonomic scope" value="Bacteria"/>
</dbReference>
<dbReference type="HOGENOM" id="CLU_039268_1_2_4"/>
<dbReference type="OrthoDB" id="9813261at2"/>
<dbReference type="UniPathway" id="UPA00219"/>
<dbReference type="Proteomes" id="UP000000374">
    <property type="component" value="Chromosome"/>
</dbReference>
<dbReference type="GO" id="GO:0005829">
    <property type="term" value="C:cytosol"/>
    <property type="evidence" value="ECO:0007669"/>
    <property type="project" value="TreeGrafter"/>
</dbReference>
<dbReference type="GO" id="GO:0005524">
    <property type="term" value="F:ATP binding"/>
    <property type="evidence" value="ECO:0007669"/>
    <property type="project" value="UniProtKB-KW"/>
</dbReference>
<dbReference type="GO" id="GO:0008716">
    <property type="term" value="F:D-alanine-D-alanine ligase activity"/>
    <property type="evidence" value="ECO:0007669"/>
    <property type="project" value="UniProtKB-UniRule"/>
</dbReference>
<dbReference type="GO" id="GO:0046872">
    <property type="term" value="F:metal ion binding"/>
    <property type="evidence" value="ECO:0007669"/>
    <property type="project" value="UniProtKB-KW"/>
</dbReference>
<dbReference type="GO" id="GO:0071555">
    <property type="term" value="P:cell wall organization"/>
    <property type="evidence" value="ECO:0007669"/>
    <property type="project" value="UniProtKB-KW"/>
</dbReference>
<dbReference type="GO" id="GO:0009252">
    <property type="term" value="P:peptidoglycan biosynthetic process"/>
    <property type="evidence" value="ECO:0007669"/>
    <property type="project" value="UniProtKB-UniRule"/>
</dbReference>
<dbReference type="GO" id="GO:0008360">
    <property type="term" value="P:regulation of cell shape"/>
    <property type="evidence" value="ECO:0007669"/>
    <property type="project" value="UniProtKB-KW"/>
</dbReference>
<dbReference type="FunFam" id="3.30.470.20:FF:000008">
    <property type="entry name" value="D-alanine--D-alanine ligase"/>
    <property type="match status" value="1"/>
</dbReference>
<dbReference type="Gene3D" id="3.40.50.20">
    <property type="match status" value="1"/>
</dbReference>
<dbReference type="Gene3D" id="3.30.1490.20">
    <property type="entry name" value="ATP-grasp fold, A domain"/>
    <property type="match status" value="1"/>
</dbReference>
<dbReference type="Gene3D" id="3.30.470.20">
    <property type="entry name" value="ATP-grasp fold, B domain"/>
    <property type="match status" value="1"/>
</dbReference>
<dbReference type="HAMAP" id="MF_00047">
    <property type="entry name" value="Dala_Dala_lig"/>
    <property type="match status" value="1"/>
</dbReference>
<dbReference type="InterPro" id="IPR011761">
    <property type="entry name" value="ATP-grasp"/>
</dbReference>
<dbReference type="InterPro" id="IPR013815">
    <property type="entry name" value="ATP_grasp_subdomain_1"/>
</dbReference>
<dbReference type="InterPro" id="IPR000291">
    <property type="entry name" value="D-Ala_lig_Van_CS"/>
</dbReference>
<dbReference type="InterPro" id="IPR005905">
    <property type="entry name" value="D_ala_D_ala"/>
</dbReference>
<dbReference type="InterPro" id="IPR011095">
    <property type="entry name" value="Dala_Dala_lig_C"/>
</dbReference>
<dbReference type="InterPro" id="IPR011127">
    <property type="entry name" value="Dala_Dala_lig_N"/>
</dbReference>
<dbReference type="InterPro" id="IPR016185">
    <property type="entry name" value="PreATP-grasp_dom_sf"/>
</dbReference>
<dbReference type="NCBIfam" id="TIGR01205">
    <property type="entry name" value="D_ala_D_alaTIGR"/>
    <property type="match status" value="1"/>
</dbReference>
<dbReference type="NCBIfam" id="NF002378">
    <property type="entry name" value="PRK01372.1"/>
    <property type="match status" value="1"/>
</dbReference>
<dbReference type="PANTHER" id="PTHR23132">
    <property type="entry name" value="D-ALANINE--D-ALANINE LIGASE"/>
    <property type="match status" value="1"/>
</dbReference>
<dbReference type="PANTHER" id="PTHR23132:SF23">
    <property type="entry name" value="D-ALANINE--D-ALANINE LIGASE B"/>
    <property type="match status" value="1"/>
</dbReference>
<dbReference type="Pfam" id="PF07478">
    <property type="entry name" value="Dala_Dala_lig_C"/>
    <property type="match status" value="1"/>
</dbReference>
<dbReference type="Pfam" id="PF01820">
    <property type="entry name" value="Dala_Dala_lig_N"/>
    <property type="match status" value="1"/>
</dbReference>
<dbReference type="PIRSF" id="PIRSF039102">
    <property type="entry name" value="Ddl/VanB"/>
    <property type="match status" value="1"/>
</dbReference>
<dbReference type="SMART" id="SM01209">
    <property type="entry name" value="GARS_A"/>
    <property type="match status" value="1"/>
</dbReference>
<dbReference type="SUPFAM" id="SSF56059">
    <property type="entry name" value="Glutathione synthetase ATP-binding domain-like"/>
    <property type="match status" value="1"/>
</dbReference>
<dbReference type="SUPFAM" id="SSF52440">
    <property type="entry name" value="PreATP-grasp domain"/>
    <property type="match status" value="1"/>
</dbReference>
<dbReference type="PROSITE" id="PS50975">
    <property type="entry name" value="ATP_GRASP"/>
    <property type="match status" value="1"/>
</dbReference>
<dbReference type="PROSITE" id="PS00843">
    <property type="entry name" value="DALA_DALA_LIGASE_1"/>
    <property type="match status" value="1"/>
</dbReference>
<dbReference type="PROSITE" id="PS00844">
    <property type="entry name" value="DALA_DALA_LIGASE_2"/>
    <property type="match status" value="1"/>
</dbReference>
<proteinExistence type="inferred from homology"/>